<proteinExistence type="inferred from homology"/>
<name>POL_HV1M2</name>
<sequence length="1434" mass="161594">MGARASVLSGGKLDAWEKIRLRPGGKKKYRLKHIVWASRELKRFALNPGLLETTEGCKKIIGQLQPSLQTGSEELKSLFNTIVVLYYVHQKIEVRDTKEALDKLQEEQDKHQQKTQQATADKGVSKGVSQNYPILQNLQGQMVHQSLSPRTLNAWVKVIEEKAFSPEVIPMFSALSEGATPQDLNTMLNTVGGHQAAMQMLKDTINEEAAEWDRLHPVHAGPIPPGQMREPRGSDIAGTTSTLQEQIAWMTSNPPVPVGEIYKRWIILGLNKIVRMYSPVSILDIKQGPKEPFRDYVDRFFKTLRAEQATQEVKGWMTETLLVQNANPDCKTILKALGPGATLEEMMTACQGVGGPSHKARILAEAMSKATGAAIMMQKSNFKGQRRIVKCFNCGKEGHIARNCRAPRKRGCWKCGQEGHQMKDCTERQANFFRENVAFQQGEARKFSSEQTRANSPASRELRVRGGDSSLPEAGAERQGTGSSLDFPQITLWQRPVVTIKVGGQLREALLDTGADDTVLEDINLPGKWKPKMIGGIGGFIKVRQYDQVSIEICGQKAIGTVLVGPTPVNIIGRNMLTQIGCTLNFPISPIETVPVKLKPGMDGPKVKQWPLTEEKIKALTEICTEMEKEGKISKIGPENPYNTPVFAIKKKDSTKWRKLVDFRELNKRTQDFWEVQLGIPHPAGLKKKRSVTVLDVGDAYFSVPLDKEFRKYTAFTIPSINNETPGIRYQYNVLPQGWKGSPAIFQSSMIKILEPFRKENPEIVIYQYMDDLYVGSDLEIGQHRAKIEELREHLLRWGFTTPDKKHQKEPPFLWMGYELHPDKWTVQAIQLPDKSSWTVNDIQKLVGKLNWASQIYPGIRVKHLCKLLRGTKALTDVVPLTAEAELELAENREILKEPVHGVYYDPSKDLIAEIQKQGHDQWTYQIYQEPHKNLKTGKYARRKSAHTNDVKQLTEVVQKVATEGIVIWGKVPKFRLPIQKETWEIWWTEYWQATWIPEWEFVNTPPLVKLWYQLETEPIIGAETFYVDGAANRETKLGKAGYITDRGRQKVVSLTETTNQKTELQAIQLALQDSGSEVNIVTDSQYALGIIQAHPDKSESEIVNQIIEQLIQKERVYLSWVPAHKGIGGNEQVDKLVSTGIRKVLFLDGIDKAQEEHEKYHSNWRAMASDFNLPPVVAKEIVASCDKCQLKGEAMHGQVDCSPGIWQLDCTHLEGKIILVAVHVASGYIEAEVIPAETGQEAAYFILKLAGRWPVKIIHTDNGSNFTSAVVKAACWWAGIQQEFGIPYNPQSQGVVESMNKELKKIIGQVRDQAEHLKTAVQMAVFIHNFKRKGGIGGYSAGERIIDIIATDIQTKELQKQISKIQNFRVYFRDSRDPVWKGPAKLLWKGEGAVVIQDNNEIKVIPRRKAKIIRDYGKQMAGDDCVAGRQDED</sequence>
<evidence type="ECO:0000250" key="1"/>
<evidence type="ECO:0000250" key="2">
    <source>
        <dbReference type="UniProtKB" id="P03347"/>
    </source>
</evidence>
<evidence type="ECO:0000250" key="3">
    <source>
        <dbReference type="UniProtKB" id="P03366"/>
    </source>
</evidence>
<evidence type="ECO:0000250" key="4">
    <source>
        <dbReference type="UniProtKB" id="P03367"/>
    </source>
</evidence>
<evidence type="ECO:0000250" key="5">
    <source>
        <dbReference type="UniProtKB" id="P04585"/>
    </source>
</evidence>
<evidence type="ECO:0000250" key="6">
    <source>
        <dbReference type="UniProtKB" id="P12493"/>
    </source>
</evidence>
<evidence type="ECO:0000250" key="7">
    <source>
        <dbReference type="UniProtKB" id="P12497"/>
    </source>
</evidence>
<evidence type="ECO:0000255" key="8"/>
<evidence type="ECO:0000255" key="9">
    <source>
        <dbReference type="PROSITE-ProRule" id="PRU00047"/>
    </source>
</evidence>
<evidence type="ECO:0000255" key="10">
    <source>
        <dbReference type="PROSITE-ProRule" id="PRU00275"/>
    </source>
</evidence>
<evidence type="ECO:0000255" key="11">
    <source>
        <dbReference type="PROSITE-ProRule" id="PRU00405"/>
    </source>
</evidence>
<evidence type="ECO:0000255" key="12">
    <source>
        <dbReference type="PROSITE-ProRule" id="PRU00408"/>
    </source>
</evidence>
<evidence type="ECO:0000255" key="13">
    <source>
        <dbReference type="PROSITE-ProRule" id="PRU00450"/>
    </source>
</evidence>
<evidence type="ECO:0000255" key="14">
    <source>
        <dbReference type="PROSITE-ProRule" id="PRU00457"/>
    </source>
</evidence>
<evidence type="ECO:0000255" key="15">
    <source>
        <dbReference type="PROSITE-ProRule" id="PRU00506"/>
    </source>
</evidence>
<evidence type="ECO:0000255" key="16">
    <source>
        <dbReference type="PROSITE-ProRule" id="PRU10094"/>
    </source>
</evidence>
<evidence type="ECO:0000256" key="17">
    <source>
        <dbReference type="SAM" id="MobiDB-lite"/>
    </source>
</evidence>
<evidence type="ECO:0000305" key="18"/>
<organismHost>
    <name type="scientific">Homo sapiens</name>
    <name type="common">Human</name>
    <dbReference type="NCBI Taxonomy" id="9606"/>
</organismHost>
<accession>Q9QBZ1</accession>
<reference key="1">
    <citation type="journal article" date="2000" name="AIDS Res. Hum. Retroviruses">
        <title>Near-full-length genome sequencing of divergent African HIV type 1 subtype F viruses leads to the identification of a new HIV type 1 subtype designated K.</title>
        <authorList>
            <person name="Triques K."/>
            <person name="Bourgeois A."/>
            <person name="Vidale N."/>
            <person name="Mpoudi-Ngole E."/>
            <person name="Mulanga-Kabeya C."/>
            <person name="Nzilambi N."/>
            <person name="Torimiro N."/>
            <person name="Saman E."/>
            <person name="Delaporte E."/>
            <person name="Peeters M."/>
        </authorList>
    </citation>
    <scope>NUCLEOTIDE SEQUENCE [GENOMIC RNA]</scope>
</reference>
<dbReference type="EC" id="3.4.23.16"/>
<dbReference type="EC" id="2.7.7.49"/>
<dbReference type="EC" id="2.7.7.7"/>
<dbReference type="EC" id="3.1.26.13"/>
<dbReference type="EC" id="3.1.13.2"/>
<dbReference type="EC" id="2.7.7.-" evidence="5"/>
<dbReference type="EC" id="3.1.-.-" evidence="5"/>
<dbReference type="EMBL" id="AJ249237">
    <property type="protein sequence ID" value="CAB58981.1"/>
    <property type="molecule type" value="Genomic_RNA"/>
</dbReference>
<dbReference type="PIR" id="C47330">
    <property type="entry name" value="C47330"/>
</dbReference>
<dbReference type="PIR" id="F47330">
    <property type="entry name" value="F47330"/>
</dbReference>
<dbReference type="BMRB" id="Q9QBZ1"/>
<dbReference type="SMR" id="Q9QBZ1"/>
<dbReference type="MEROPS" id="A02.001"/>
<dbReference type="PRO" id="PR:Q9QBZ1"/>
<dbReference type="Proteomes" id="UP000121652">
    <property type="component" value="Segment"/>
</dbReference>
<dbReference type="GO" id="GO:0043657">
    <property type="term" value="C:host cell"/>
    <property type="evidence" value="ECO:0007669"/>
    <property type="project" value="GOC"/>
</dbReference>
<dbReference type="GO" id="GO:0042025">
    <property type="term" value="C:host cell nucleus"/>
    <property type="evidence" value="ECO:0007669"/>
    <property type="project" value="UniProtKB-SubCell"/>
</dbReference>
<dbReference type="GO" id="GO:0020002">
    <property type="term" value="C:host cell plasma membrane"/>
    <property type="evidence" value="ECO:0007669"/>
    <property type="project" value="UniProtKB-SubCell"/>
</dbReference>
<dbReference type="GO" id="GO:0072494">
    <property type="term" value="C:host multivesicular body"/>
    <property type="evidence" value="ECO:0007669"/>
    <property type="project" value="UniProtKB-SubCell"/>
</dbReference>
<dbReference type="GO" id="GO:0016020">
    <property type="term" value="C:membrane"/>
    <property type="evidence" value="ECO:0007669"/>
    <property type="project" value="UniProtKB-KW"/>
</dbReference>
<dbReference type="GO" id="GO:0019013">
    <property type="term" value="C:viral nucleocapsid"/>
    <property type="evidence" value="ECO:0007669"/>
    <property type="project" value="UniProtKB-KW"/>
</dbReference>
<dbReference type="GO" id="GO:0055036">
    <property type="term" value="C:virion membrane"/>
    <property type="evidence" value="ECO:0007669"/>
    <property type="project" value="UniProtKB-SubCell"/>
</dbReference>
<dbReference type="GO" id="GO:0004190">
    <property type="term" value="F:aspartic-type endopeptidase activity"/>
    <property type="evidence" value="ECO:0007669"/>
    <property type="project" value="UniProtKB-KW"/>
</dbReference>
<dbReference type="GO" id="GO:0003677">
    <property type="term" value="F:DNA binding"/>
    <property type="evidence" value="ECO:0007669"/>
    <property type="project" value="UniProtKB-KW"/>
</dbReference>
<dbReference type="GO" id="GO:0003887">
    <property type="term" value="F:DNA-directed DNA polymerase activity"/>
    <property type="evidence" value="ECO:0007669"/>
    <property type="project" value="UniProtKB-KW"/>
</dbReference>
<dbReference type="GO" id="GO:0004533">
    <property type="term" value="F:exoribonuclease H activity"/>
    <property type="evidence" value="ECO:0007669"/>
    <property type="project" value="UniProtKB-EC"/>
</dbReference>
<dbReference type="GO" id="GO:0008289">
    <property type="term" value="F:lipid binding"/>
    <property type="evidence" value="ECO:0007669"/>
    <property type="project" value="UniProtKB-KW"/>
</dbReference>
<dbReference type="GO" id="GO:0035613">
    <property type="term" value="F:RNA stem-loop binding"/>
    <property type="evidence" value="ECO:0007669"/>
    <property type="project" value="TreeGrafter"/>
</dbReference>
<dbReference type="GO" id="GO:0003964">
    <property type="term" value="F:RNA-directed DNA polymerase activity"/>
    <property type="evidence" value="ECO:0007669"/>
    <property type="project" value="UniProtKB-KW"/>
</dbReference>
<dbReference type="GO" id="GO:0004523">
    <property type="term" value="F:RNA-DNA hybrid ribonuclease activity"/>
    <property type="evidence" value="ECO:0007669"/>
    <property type="project" value="InterPro"/>
</dbReference>
<dbReference type="GO" id="GO:0005198">
    <property type="term" value="F:structural molecule activity"/>
    <property type="evidence" value="ECO:0007669"/>
    <property type="project" value="InterPro"/>
</dbReference>
<dbReference type="GO" id="GO:0008270">
    <property type="term" value="F:zinc ion binding"/>
    <property type="evidence" value="ECO:0007669"/>
    <property type="project" value="UniProtKB-KW"/>
</dbReference>
<dbReference type="GO" id="GO:0015074">
    <property type="term" value="P:DNA integration"/>
    <property type="evidence" value="ECO:0007669"/>
    <property type="project" value="UniProtKB-KW"/>
</dbReference>
<dbReference type="GO" id="GO:0006310">
    <property type="term" value="P:DNA recombination"/>
    <property type="evidence" value="ECO:0007669"/>
    <property type="project" value="UniProtKB-KW"/>
</dbReference>
<dbReference type="GO" id="GO:0075713">
    <property type="term" value="P:establishment of integrated proviral latency"/>
    <property type="evidence" value="ECO:0007669"/>
    <property type="project" value="UniProtKB-KW"/>
</dbReference>
<dbReference type="GO" id="GO:0006508">
    <property type="term" value="P:proteolysis"/>
    <property type="evidence" value="ECO:0007669"/>
    <property type="project" value="UniProtKB-KW"/>
</dbReference>
<dbReference type="GO" id="GO:0046718">
    <property type="term" value="P:symbiont entry into host cell"/>
    <property type="evidence" value="ECO:0007669"/>
    <property type="project" value="UniProtKB-KW"/>
</dbReference>
<dbReference type="GO" id="GO:0052151">
    <property type="term" value="P:symbiont-mediated activation of host apoptosis"/>
    <property type="evidence" value="ECO:0007669"/>
    <property type="project" value="UniProtKB-KW"/>
</dbReference>
<dbReference type="GO" id="GO:0039657">
    <property type="term" value="P:symbiont-mediated suppression of host gene expression"/>
    <property type="evidence" value="ECO:0007669"/>
    <property type="project" value="UniProtKB-KW"/>
</dbReference>
<dbReference type="GO" id="GO:0044826">
    <property type="term" value="P:viral genome integration into host DNA"/>
    <property type="evidence" value="ECO:0007669"/>
    <property type="project" value="UniProtKB-KW"/>
</dbReference>
<dbReference type="GO" id="GO:0075732">
    <property type="term" value="P:viral penetration into host nucleus"/>
    <property type="evidence" value="ECO:0007669"/>
    <property type="project" value="UniProtKB-KW"/>
</dbReference>
<dbReference type="GO" id="GO:0075523">
    <property type="term" value="P:viral translational frameshifting"/>
    <property type="evidence" value="ECO:0007669"/>
    <property type="project" value="UniProtKB-KW"/>
</dbReference>
<dbReference type="CDD" id="cd05482">
    <property type="entry name" value="HIV_retropepsin_like"/>
    <property type="match status" value="1"/>
</dbReference>
<dbReference type="CDD" id="cd01645">
    <property type="entry name" value="RT_Rtv"/>
    <property type="match status" value="1"/>
</dbReference>
<dbReference type="FunFam" id="1.10.1200.30:FF:000001">
    <property type="entry name" value="Gag polyprotein"/>
    <property type="match status" value="1"/>
</dbReference>
<dbReference type="FunFam" id="1.10.375.10:FF:000001">
    <property type="entry name" value="Gag polyprotein"/>
    <property type="match status" value="1"/>
</dbReference>
<dbReference type="FunFam" id="4.10.60.10:FF:000001">
    <property type="entry name" value="Gag polyprotein"/>
    <property type="match status" value="1"/>
</dbReference>
<dbReference type="FunFam" id="2.40.70.10:FF:000001">
    <property type="entry name" value="Gag-Pol polyprotein"/>
    <property type="match status" value="1"/>
</dbReference>
<dbReference type="FunFam" id="3.30.420.10:FF:000025">
    <property type="entry name" value="Gag-Pol polyprotein"/>
    <property type="match status" value="1"/>
</dbReference>
<dbReference type="FunFam" id="3.30.70.270:FF:000006">
    <property type="entry name" value="Gag-Pol polyprotein"/>
    <property type="match status" value="1"/>
</dbReference>
<dbReference type="FunFam" id="3.30.420.10:FF:000017">
    <property type="entry name" value="POL polyprotein"/>
    <property type="match status" value="1"/>
</dbReference>
<dbReference type="Gene3D" id="1.10.10.200">
    <property type="match status" value="1"/>
</dbReference>
<dbReference type="Gene3D" id="1.10.1200.30">
    <property type="match status" value="1"/>
</dbReference>
<dbReference type="Gene3D" id="3.30.70.270">
    <property type="match status" value="3"/>
</dbReference>
<dbReference type="Gene3D" id="2.40.70.10">
    <property type="entry name" value="Acid Proteases"/>
    <property type="match status" value="1"/>
</dbReference>
<dbReference type="Gene3D" id="3.10.10.10">
    <property type="entry name" value="HIV Type 1 Reverse Transcriptase, subunit A, domain 1"/>
    <property type="match status" value="1"/>
</dbReference>
<dbReference type="Gene3D" id="1.10.375.10">
    <property type="entry name" value="Human Immunodeficiency Virus Type 1 Capsid Protein"/>
    <property type="match status" value="1"/>
</dbReference>
<dbReference type="Gene3D" id="1.10.150.90">
    <property type="entry name" value="Immunodeficiency lentiviruses, gag gene matrix protein p17"/>
    <property type="match status" value="1"/>
</dbReference>
<dbReference type="Gene3D" id="2.30.30.10">
    <property type="entry name" value="Integrase, C-terminal domain superfamily, retroviral"/>
    <property type="match status" value="1"/>
</dbReference>
<dbReference type="Gene3D" id="3.30.420.10">
    <property type="entry name" value="Ribonuclease H-like superfamily/Ribonuclease H"/>
    <property type="match status" value="2"/>
</dbReference>
<dbReference type="Gene3D" id="1.20.5.760">
    <property type="entry name" value="Single helix bin"/>
    <property type="match status" value="1"/>
</dbReference>
<dbReference type="Gene3D" id="4.10.60.10">
    <property type="entry name" value="Zinc finger, CCHC-type"/>
    <property type="match status" value="1"/>
</dbReference>
<dbReference type="InterPro" id="IPR001969">
    <property type="entry name" value="Aspartic_peptidase_AS"/>
</dbReference>
<dbReference type="InterPro" id="IPR043502">
    <property type="entry name" value="DNA/RNA_pol_sf"/>
</dbReference>
<dbReference type="InterPro" id="IPR045345">
    <property type="entry name" value="Gag_p24_C"/>
</dbReference>
<dbReference type="InterPro" id="IPR017856">
    <property type="entry name" value="Integrase-like_N"/>
</dbReference>
<dbReference type="InterPro" id="IPR036862">
    <property type="entry name" value="Integrase_C_dom_sf_retrovir"/>
</dbReference>
<dbReference type="InterPro" id="IPR001037">
    <property type="entry name" value="Integrase_C_retrovir"/>
</dbReference>
<dbReference type="InterPro" id="IPR001584">
    <property type="entry name" value="Integrase_cat-core"/>
</dbReference>
<dbReference type="InterPro" id="IPR003308">
    <property type="entry name" value="Integrase_Zn-bd_dom_N"/>
</dbReference>
<dbReference type="InterPro" id="IPR000071">
    <property type="entry name" value="Lentvrl_matrix_N"/>
</dbReference>
<dbReference type="InterPro" id="IPR012344">
    <property type="entry name" value="Matrix_HIV/RSV_N"/>
</dbReference>
<dbReference type="InterPro" id="IPR001995">
    <property type="entry name" value="Peptidase_A2_cat"/>
</dbReference>
<dbReference type="InterPro" id="IPR021109">
    <property type="entry name" value="Peptidase_aspartic_dom_sf"/>
</dbReference>
<dbReference type="InterPro" id="IPR034170">
    <property type="entry name" value="Retropepsin-like_cat_dom"/>
</dbReference>
<dbReference type="InterPro" id="IPR018061">
    <property type="entry name" value="Retropepsins"/>
</dbReference>
<dbReference type="InterPro" id="IPR008916">
    <property type="entry name" value="Retrov_capsid_C"/>
</dbReference>
<dbReference type="InterPro" id="IPR008919">
    <property type="entry name" value="Retrov_capsid_N"/>
</dbReference>
<dbReference type="InterPro" id="IPR010999">
    <property type="entry name" value="Retrovr_matrix"/>
</dbReference>
<dbReference type="InterPro" id="IPR043128">
    <property type="entry name" value="Rev_trsase/Diguanyl_cyclase"/>
</dbReference>
<dbReference type="InterPro" id="IPR012337">
    <property type="entry name" value="RNaseH-like_sf"/>
</dbReference>
<dbReference type="InterPro" id="IPR002156">
    <property type="entry name" value="RNaseH_domain"/>
</dbReference>
<dbReference type="InterPro" id="IPR036397">
    <property type="entry name" value="RNaseH_sf"/>
</dbReference>
<dbReference type="InterPro" id="IPR000477">
    <property type="entry name" value="RT_dom"/>
</dbReference>
<dbReference type="InterPro" id="IPR010659">
    <property type="entry name" value="RVT_connect"/>
</dbReference>
<dbReference type="InterPro" id="IPR010661">
    <property type="entry name" value="RVT_thumb"/>
</dbReference>
<dbReference type="InterPro" id="IPR001878">
    <property type="entry name" value="Znf_CCHC"/>
</dbReference>
<dbReference type="InterPro" id="IPR036875">
    <property type="entry name" value="Znf_CCHC_sf"/>
</dbReference>
<dbReference type="PANTHER" id="PTHR41694">
    <property type="entry name" value="ENDOGENOUS RETROVIRUS GROUP K MEMBER POL PROTEIN"/>
    <property type="match status" value="1"/>
</dbReference>
<dbReference type="PANTHER" id="PTHR41694:SF3">
    <property type="entry name" value="RNA-DIRECTED DNA POLYMERASE-RELATED"/>
    <property type="match status" value="1"/>
</dbReference>
<dbReference type="Pfam" id="PF00540">
    <property type="entry name" value="Gag_p17"/>
    <property type="match status" value="1"/>
</dbReference>
<dbReference type="Pfam" id="PF19317">
    <property type="entry name" value="Gag_p24_C"/>
    <property type="match status" value="1"/>
</dbReference>
<dbReference type="Pfam" id="PF00552">
    <property type="entry name" value="IN_DBD_C"/>
    <property type="match status" value="1"/>
</dbReference>
<dbReference type="Pfam" id="PF02022">
    <property type="entry name" value="Integrase_Zn"/>
    <property type="match status" value="1"/>
</dbReference>
<dbReference type="Pfam" id="PF00075">
    <property type="entry name" value="RNase_H"/>
    <property type="match status" value="1"/>
</dbReference>
<dbReference type="Pfam" id="PF00665">
    <property type="entry name" value="rve"/>
    <property type="match status" value="1"/>
</dbReference>
<dbReference type="Pfam" id="PF00077">
    <property type="entry name" value="RVP"/>
    <property type="match status" value="1"/>
</dbReference>
<dbReference type="Pfam" id="PF00078">
    <property type="entry name" value="RVT_1"/>
    <property type="match status" value="1"/>
</dbReference>
<dbReference type="Pfam" id="PF06815">
    <property type="entry name" value="RVT_connect"/>
    <property type="match status" value="1"/>
</dbReference>
<dbReference type="Pfam" id="PF06817">
    <property type="entry name" value="RVT_thumb"/>
    <property type="match status" value="1"/>
</dbReference>
<dbReference type="Pfam" id="PF00098">
    <property type="entry name" value="zf-CCHC"/>
    <property type="match status" value="2"/>
</dbReference>
<dbReference type="PRINTS" id="PR00234">
    <property type="entry name" value="HIV1MATRIX"/>
</dbReference>
<dbReference type="SMART" id="SM00343">
    <property type="entry name" value="ZnF_C2HC"/>
    <property type="match status" value="2"/>
</dbReference>
<dbReference type="SUPFAM" id="SSF50630">
    <property type="entry name" value="Acid proteases"/>
    <property type="match status" value="1"/>
</dbReference>
<dbReference type="SUPFAM" id="SSF50122">
    <property type="entry name" value="DNA-binding domain of retroviral integrase"/>
    <property type="match status" value="1"/>
</dbReference>
<dbReference type="SUPFAM" id="SSF56672">
    <property type="entry name" value="DNA/RNA polymerases"/>
    <property type="match status" value="1"/>
</dbReference>
<dbReference type="SUPFAM" id="SSF46919">
    <property type="entry name" value="N-terminal Zn binding domain of HIV integrase"/>
    <property type="match status" value="1"/>
</dbReference>
<dbReference type="SUPFAM" id="SSF47836">
    <property type="entry name" value="Retroviral matrix proteins"/>
    <property type="match status" value="1"/>
</dbReference>
<dbReference type="SUPFAM" id="SSF47353">
    <property type="entry name" value="Retrovirus capsid dimerization domain-like"/>
    <property type="match status" value="1"/>
</dbReference>
<dbReference type="SUPFAM" id="SSF47943">
    <property type="entry name" value="Retrovirus capsid protein, N-terminal core domain"/>
    <property type="match status" value="1"/>
</dbReference>
<dbReference type="SUPFAM" id="SSF57756">
    <property type="entry name" value="Retrovirus zinc finger-like domains"/>
    <property type="match status" value="1"/>
</dbReference>
<dbReference type="SUPFAM" id="SSF53098">
    <property type="entry name" value="Ribonuclease H-like"/>
    <property type="match status" value="2"/>
</dbReference>
<dbReference type="PROSITE" id="PS50175">
    <property type="entry name" value="ASP_PROT_RETROV"/>
    <property type="match status" value="1"/>
</dbReference>
<dbReference type="PROSITE" id="PS00141">
    <property type="entry name" value="ASP_PROTEASE"/>
    <property type="match status" value="1"/>
</dbReference>
<dbReference type="PROSITE" id="PS50994">
    <property type="entry name" value="INTEGRASE"/>
    <property type="match status" value="1"/>
</dbReference>
<dbReference type="PROSITE" id="PS51027">
    <property type="entry name" value="INTEGRASE_DBD"/>
    <property type="match status" value="1"/>
</dbReference>
<dbReference type="PROSITE" id="PS50879">
    <property type="entry name" value="RNASE_H_1"/>
    <property type="match status" value="1"/>
</dbReference>
<dbReference type="PROSITE" id="PS50878">
    <property type="entry name" value="RT_POL"/>
    <property type="match status" value="1"/>
</dbReference>
<dbReference type="PROSITE" id="PS50158">
    <property type="entry name" value="ZF_CCHC"/>
    <property type="match status" value="2"/>
</dbReference>
<dbReference type="PROSITE" id="PS50876">
    <property type="entry name" value="ZF_INTEGRASE"/>
    <property type="match status" value="1"/>
</dbReference>
<organism>
    <name type="scientific">Human immunodeficiency virus type 1 group M subtype F2 (isolate MP257)</name>
    <name type="common">HIV-1</name>
    <dbReference type="NCBI Taxonomy" id="388823"/>
    <lineage>
        <taxon>Viruses</taxon>
        <taxon>Riboviria</taxon>
        <taxon>Pararnavirae</taxon>
        <taxon>Artverviricota</taxon>
        <taxon>Revtraviricetes</taxon>
        <taxon>Ortervirales</taxon>
        <taxon>Retroviridae</taxon>
        <taxon>Orthoretrovirinae</taxon>
        <taxon>Lentivirus</taxon>
        <taxon>Human immunodeficiency virus type 1</taxon>
    </lineage>
</organism>
<gene>
    <name type="primary">gag-pol</name>
</gene>
<feature type="initiator methionine" description="Removed; by host" evidence="1">
    <location>
        <position position="1"/>
    </location>
</feature>
<feature type="chain" id="PRO_0000261273" description="Gag-Pol polyprotein">
    <location>
        <begin position="2"/>
        <end position="1434"/>
    </location>
</feature>
<feature type="chain" id="PRO_0000246516" description="Matrix protein p17" evidence="1">
    <location>
        <begin position="2"/>
        <end position="132"/>
    </location>
</feature>
<feature type="chain" id="PRO_0000246517" description="Capsid protein p24" evidence="1">
    <location>
        <begin position="133"/>
        <end position="363"/>
    </location>
</feature>
<feature type="peptide" id="PRO_0000246518" description="Spacer peptide 1" evidence="1">
    <location>
        <begin position="364"/>
        <end position="376"/>
    </location>
</feature>
<feature type="chain" id="PRO_0000246519" description="Nucleocapsid protein p7" evidence="1">
    <location>
        <begin position="377"/>
        <end position="431"/>
    </location>
</feature>
<feature type="peptide" id="PRO_0000246722" description="Transframe peptide" evidence="8">
    <location>
        <begin position="432"/>
        <end position="439"/>
    </location>
</feature>
<feature type="chain" id="PRO_0000246520" description="p6-pol" evidence="8">
    <location>
        <begin position="440"/>
        <end position="487"/>
    </location>
</feature>
<feature type="chain" id="PRO_0000246521" description="Protease" evidence="1">
    <location>
        <begin position="488"/>
        <end position="586"/>
    </location>
</feature>
<feature type="chain" id="PRO_0000246522" description="Reverse transcriptase/ribonuclease H" evidence="1">
    <location>
        <begin position="587"/>
        <end position="1146"/>
    </location>
</feature>
<feature type="chain" id="PRO_0000246523" description="p51 RT" evidence="1">
    <location>
        <begin position="587"/>
        <end position="1026"/>
    </location>
</feature>
<feature type="chain" id="PRO_0000246524" description="p15" evidence="1">
    <location>
        <begin position="1027"/>
        <end position="1146"/>
    </location>
</feature>
<feature type="chain" id="PRO_0000246525" description="Integrase" evidence="1">
    <location>
        <begin position="1147"/>
        <end position="1434"/>
    </location>
</feature>
<feature type="domain" description="Peptidase A2" evidence="10">
    <location>
        <begin position="507"/>
        <end position="576"/>
    </location>
</feature>
<feature type="domain" description="Reverse transcriptase" evidence="11">
    <location>
        <begin position="630"/>
        <end position="820"/>
    </location>
</feature>
<feature type="domain" description="RNase H type-1" evidence="12">
    <location>
        <begin position="1020"/>
        <end position="1143"/>
    </location>
</feature>
<feature type="domain" description="Integrase catalytic" evidence="14">
    <location>
        <begin position="1200"/>
        <end position="1350"/>
    </location>
</feature>
<feature type="zinc finger region" description="CCHC-type 1" evidence="9">
    <location>
        <begin position="389"/>
        <end position="406"/>
    </location>
</feature>
<feature type="zinc finger region" description="CCHC-type 2" evidence="9">
    <location>
        <begin position="410"/>
        <end position="427"/>
    </location>
</feature>
<feature type="zinc finger region" description="Integrase-type" evidence="13">
    <location>
        <begin position="1149"/>
        <end position="1190"/>
    </location>
</feature>
<feature type="DNA-binding region" description="Integrase-type" evidence="15">
    <location>
        <begin position="1369"/>
        <end position="1416"/>
    </location>
</feature>
<feature type="region of interest" description="Interaction with Gp41" evidence="7">
    <location>
        <begin position="7"/>
        <end position="31"/>
    </location>
</feature>
<feature type="region of interest" description="Interaction with host CALM1" evidence="5">
    <location>
        <begin position="8"/>
        <end position="43"/>
    </location>
</feature>
<feature type="region of interest" description="Interaction with host AP3D1" evidence="7">
    <location>
        <begin position="12"/>
        <end position="19"/>
    </location>
</feature>
<feature type="region of interest" description="Interaction with membrane phosphatidylinositol 4,5-bisphosphate and RNA" evidence="7">
    <location>
        <begin position="14"/>
        <end position="33"/>
    </location>
</feature>
<feature type="region of interest" description="Interaction with membrane phosphatidylinositol 4,5-bisphosphate" evidence="7">
    <location>
        <begin position="73"/>
        <end position="77"/>
    </location>
</feature>
<feature type="region of interest" description="Disordered" evidence="17">
    <location>
        <begin position="103"/>
        <end position="124"/>
    </location>
</feature>
<feature type="region of interest" description="Interaction with human PPIA/CYPA and NUP153" evidence="7">
    <location>
        <begin position="189"/>
        <end position="227"/>
    </location>
</feature>
<feature type="region of interest" description="Dimerization/Multimerization of capsid protein p24" evidence="5">
    <location>
        <begin position="277"/>
        <end position="363"/>
    </location>
</feature>
<feature type="region of interest" description="Disordered" evidence="17">
    <location>
        <begin position="443"/>
        <end position="483"/>
    </location>
</feature>
<feature type="region of interest" description="Dimerization of protease" evidence="5">
    <location>
        <begin position="488"/>
        <end position="492"/>
    </location>
</feature>
<feature type="region of interest" description="Dimerization of protease" evidence="5">
    <location>
        <begin position="536"/>
        <end position="542"/>
    </location>
</feature>
<feature type="region of interest" description="Dimerization of protease" evidence="5">
    <location>
        <begin position="575"/>
        <end position="587"/>
    </location>
</feature>
<feature type="region of interest" description="RT 'primer grip'" evidence="1">
    <location>
        <begin position="813"/>
        <end position="821"/>
    </location>
</feature>
<feature type="short sequence motif" description="Nuclear export signal" evidence="1">
    <location>
        <begin position="16"/>
        <end position="22"/>
    </location>
</feature>
<feature type="short sequence motif" description="Nuclear localization signal" evidence="1">
    <location>
        <begin position="26"/>
        <end position="32"/>
    </location>
</feature>
<feature type="short sequence motif" description="Tryptophan repeat motif" evidence="1">
    <location>
        <begin position="984"/>
        <end position="1000"/>
    </location>
</feature>
<feature type="compositionally biased region" description="Basic and acidic residues" evidence="17">
    <location>
        <begin position="103"/>
        <end position="112"/>
    </location>
</feature>
<feature type="compositionally biased region" description="Polar residues" evidence="17">
    <location>
        <begin position="449"/>
        <end position="458"/>
    </location>
</feature>
<feature type="active site" description="For protease activity; shared with dimeric partner" evidence="16">
    <location>
        <position position="512"/>
    </location>
</feature>
<feature type="binding site" evidence="1">
    <location>
        <position position="696"/>
    </location>
    <ligand>
        <name>Mg(2+)</name>
        <dbReference type="ChEBI" id="CHEBI:18420"/>
        <label>1</label>
        <note>catalytic; for reverse transcriptase activity</note>
    </ligand>
</feature>
<feature type="binding site" evidence="1">
    <location>
        <position position="771"/>
    </location>
    <ligand>
        <name>Mg(2+)</name>
        <dbReference type="ChEBI" id="CHEBI:18420"/>
        <label>1</label>
        <note>catalytic; for reverse transcriptase activity</note>
    </ligand>
</feature>
<feature type="binding site" evidence="1">
    <location>
        <position position="772"/>
    </location>
    <ligand>
        <name>Mg(2+)</name>
        <dbReference type="ChEBI" id="CHEBI:18420"/>
        <label>1</label>
        <note>catalytic; for reverse transcriptase activity</note>
    </ligand>
</feature>
<feature type="binding site" evidence="1">
    <location>
        <position position="1029"/>
    </location>
    <ligand>
        <name>Mg(2+)</name>
        <dbReference type="ChEBI" id="CHEBI:18420"/>
        <label>2</label>
        <note>catalytic; for RNase H activity</note>
    </ligand>
</feature>
<feature type="binding site" evidence="1">
    <location>
        <position position="1064"/>
    </location>
    <ligand>
        <name>Mg(2+)</name>
        <dbReference type="ChEBI" id="CHEBI:18420"/>
        <label>2</label>
        <note>catalytic; for RNase H activity</note>
    </ligand>
</feature>
<feature type="binding site" evidence="1">
    <location>
        <position position="1084"/>
    </location>
    <ligand>
        <name>Mg(2+)</name>
        <dbReference type="ChEBI" id="CHEBI:18420"/>
        <label>2</label>
        <note>catalytic; for RNase H activity</note>
    </ligand>
</feature>
<feature type="binding site" evidence="1">
    <location>
        <position position="1135"/>
    </location>
    <ligand>
        <name>Mg(2+)</name>
        <dbReference type="ChEBI" id="CHEBI:18420"/>
        <label>2</label>
        <note>catalytic; for RNase H activity</note>
    </ligand>
</feature>
<feature type="binding site" evidence="13">
    <location>
        <position position="1158"/>
    </location>
    <ligand>
        <name>Zn(2+)</name>
        <dbReference type="ChEBI" id="CHEBI:29105"/>
    </ligand>
</feature>
<feature type="binding site" evidence="13">
    <location>
        <position position="1162"/>
    </location>
    <ligand>
        <name>Zn(2+)</name>
        <dbReference type="ChEBI" id="CHEBI:29105"/>
    </ligand>
</feature>
<feature type="binding site" evidence="13">
    <location>
        <position position="1186"/>
    </location>
    <ligand>
        <name>Zn(2+)</name>
        <dbReference type="ChEBI" id="CHEBI:29105"/>
    </ligand>
</feature>
<feature type="binding site" evidence="13">
    <location>
        <position position="1189"/>
    </location>
    <ligand>
        <name>Zn(2+)</name>
        <dbReference type="ChEBI" id="CHEBI:29105"/>
    </ligand>
</feature>
<feature type="binding site" evidence="1">
    <location>
        <position position="1210"/>
    </location>
    <ligand>
        <name>Mg(2+)</name>
        <dbReference type="ChEBI" id="CHEBI:18420"/>
        <label>3</label>
        <note>catalytic; for integrase activity</note>
    </ligand>
</feature>
<feature type="binding site" evidence="1">
    <location>
        <position position="1262"/>
    </location>
    <ligand>
        <name>Mg(2+)</name>
        <dbReference type="ChEBI" id="CHEBI:18420"/>
        <label>3</label>
        <note>catalytic; for integrase activity</note>
    </ligand>
</feature>
<feature type="binding site" evidence="5">
    <location>
        <position position="1298"/>
    </location>
    <ligand>
        <name>Mg(2+)</name>
        <dbReference type="ChEBI" id="CHEBI:18420"/>
        <label>3</label>
        <note>catalytic; for integrase activity</note>
    </ligand>
</feature>
<feature type="site" description="Cleavage; by viral protease" evidence="1">
    <location>
        <begin position="132"/>
        <end position="133"/>
    </location>
</feature>
<feature type="site" description="Cis/trans isomerization of proline peptide bond; by human PPIA/CYPA" evidence="1">
    <location>
        <begin position="221"/>
        <end position="222"/>
    </location>
</feature>
<feature type="site" description="Cleavage; by viral protease" evidence="1">
    <location>
        <begin position="363"/>
        <end position="364"/>
    </location>
</feature>
<feature type="site" description="Cleavage; by viral protease" evidence="1">
    <location>
        <begin position="376"/>
        <end position="377"/>
    </location>
</feature>
<feature type="site" description="Cleavage; by viral protease" evidence="8">
    <location>
        <begin position="431"/>
        <end position="432"/>
    </location>
</feature>
<feature type="site" description="Cleavage; by viral protease" evidence="1">
    <location>
        <begin position="439"/>
        <end position="440"/>
    </location>
</feature>
<feature type="site" description="Cleavage; by viral protease" evidence="1">
    <location>
        <begin position="487"/>
        <end position="488"/>
    </location>
</feature>
<feature type="site" description="Cleavage; by viral protease" evidence="1">
    <location>
        <begin position="586"/>
        <end position="587"/>
    </location>
</feature>
<feature type="site" description="Essential for RT p66/p51 heterodimerization" evidence="1">
    <location>
        <position position="987"/>
    </location>
</feature>
<feature type="site" description="Essential for RT p66/p51 heterodimerization" evidence="1">
    <location>
        <position position="1000"/>
    </location>
</feature>
<feature type="site" description="Cleavage; by viral protease; partial" evidence="1">
    <location>
        <begin position="1026"/>
        <end position="1027"/>
    </location>
</feature>
<feature type="site" description="Cleavage; by viral protease" evidence="1">
    <location>
        <begin position="1146"/>
        <end position="1147"/>
    </location>
</feature>
<feature type="modified residue" description="Phosphotyrosine; by host" evidence="1">
    <location>
        <position position="132"/>
    </location>
</feature>
<feature type="lipid moiety-binding region" description="N-myristoyl glycine; by host" evidence="1">
    <location>
        <position position="2"/>
    </location>
</feature>
<comment type="function">
    <molecule>Gag-Pol polyprotein</molecule>
    <text evidence="1">Mediates, with Gag polyprotein, the essential events in virion assembly, including binding the plasma membrane, making the protein-protein interactions necessary to create spherical particles, recruiting the viral Env proteins, and packaging the genomic RNA via direct interactions with the RNA packaging sequence (Psi). Gag-Pol polyprotein may regulate its own translation, by the binding genomic RNA in the 5'-UTR. At low concentration, the polyprotein would promote translation, whereas at high concentration, the polyprotein would encapsidate genomic RNA and then shut off translation.</text>
</comment>
<comment type="function">
    <molecule>Matrix protein p17</molecule>
    <text evidence="7">Targets the polyprotein to the plasma membrane via a multipartite membrane-binding signal, that includes its myristoylated N-terminus. Matrix protein is part of the pre-integration complex. Implicated in the release from host cell mediated by Vpu. Binds to RNA.</text>
</comment>
<comment type="function">
    <molecule>Capsid protein p24</molecule>
    <text evidence="5 7">Forms the conical core that encapsulates the genomic RNA-nucleocapsid complex in the virion. Most core are conical, with only 7% tubular. The core is constituted by capsid protein hexamer subunits. The core is disassembled soon after virion entry (By similarity). Host restriction factors such as TRIM5-alpha or TRIMCyp bind retroviral capsids and cause premature capsid disassembly, leading to blocks in reverse transcription. Capsid restriction by TRIM5 is one of the factors which restricts HIV-1 to the human species. Host PIN1 apparently facilitates the virion uncoating. On the other hand, interactions with PDZD8 or CYPA stabilize the capsid.</text>
</comment>
<comment type="function">
    <molecule>Nucleocapsid protein p7</molecule>
    <text evidence="5">Encapsulates and protects viral dimeric unspliced genomic RNA (gRNA). Binds these RNAs through its zinc fingers. Acts as a nucleic acid chaperone which is involved in rearangement of nucleic acid secondary structure during gRNA retrotranscription. Also facilitates template switch leading to recombination. As part of the polyprotein, participates in gRNA dimerization, packaging, tRNA incorporation and virion assembly.</text>
</comment>
<comment type="function">
    <molecule>Protease</molecule>
    <text evidence="5 10">Aspartyl protease that mediates proteolytic cleavages of Gag and Gag-Pol polyproteins during or shortly after the release of the virion from the plasma membrane. Cleavages take place as an ordered, step-wise cascade to yield mature proteins. This process is called maturation. Displays maximal activity during the budding process just prior to particle release from the cell. Also cleaves Nef and Vif, probably concomitantly with viral structural proteins on maturation of virus particles. Hydrolyzes host EIF4GI and PABP1 in order to shut off the capped cellular mRNA translation. The resulting inhibition of cellular protein synthesis serves to ensure maximal viral gene expression and to evade host immune response. Also mediates cleavage of host YTHDF3. Mediates cleavage of host CARD8, thereby activating the CARD8 inflammasome, leading to the clearance of latent HIV-1 in patient CD4(+) T-cells after viral reactivation; in contrast, HIV-1 can evade CARD8-sensing when its protease remains inactive in infected cells prior to viral budding (By similarity).</text>
</comment>
<comment type="function">
    <molecule>Reverse transcriptase/ribonuclease H</molecule>
    <text evidence="5">Multifunctional enzyme that converts the viral RNA genome into dsDNA in the cytoplasm, shortly after virus entry into the cell. This enzyme displays a DNA polymerase activity that can copy either DNA or RNA templates, and a ribonuclease H (RNase H) activity that cleaves the RNA strand of RNA-DNA heteroduplexes in a partially processive 3' to 5' endonucleasic mode. Conversion of viral genomic RNA into dsDNA requires many steps. A tRNA(3)-Lys binds to the primer-binding site (PBS) situated at the 5'-end of the viral RNA. RT uses the 3' end of the tRNA primer to perform a short round of RNA-dependent minus-strand DNA synthesis. The reading proceeds through the U5 region and ends after the repeated (R) region which is present at both ends of viral RNA. The portion of the RNA-DNA heteroduplex is digested by the RNase H, resulting in a ssDNA product attached to the tRNA primer. This ssDNA/tRNA hybridizes with the identical R region situated at the 3' end of viral RNA. This template exchange, known as minus-strand DNA strong stop transfer, can be either intra- or intermolecular. RT uses the 3' end of this newly synthesized short ssDNA to perform the RNA-dependent minus-strand DNA synthesis of the whole template. RNase H digests the RNA template except for two polypurine tracts (PPTs) situated at the 5'-end and near the center of the genome. It is not clear if both polymerase and RNase H activities are simultaneous. RNase H probably can proceed both in a polymerase-dependent (RNA cut into small fragments by the same RT performing DNA synthesis) and a polymerase-independent mode (cleavage of remaining RNA fragments by free RTs). Secondly, RT performs DNA-directed plus-strand DNA synthesis using the PPTs that have not been removed by RNase H as primers. PPTs and tRNA primers are then removed by RNase H. The 3' and 5' ssDNA PBS regions hybridize to form a circular dsDNA intermediate. Strand displacement synthesis by RT to the PBS and PPT ends produces a blunt ended, linear dsDNA copy of the viral genome that includes long terminal repeats (LTRs) at both ends.</text>
</comment>
<comment type="function">
    <molecule>Integrase</molecule>
    <text evidence="5">Catalyzes viral DNA integration into the host chromosome, by performing a series of DNA cutting and joining reactions. This enzyme activity takes place after virion entry into a cell and reverse transcription of the RNA genome in dsDNA. The first step in the integration process is 3' processing. This step requires a complex comprising the viral genome, matrix protein, Vpr and integrase. This complex is called the pre-integration complex (PIC). The integrase protein removes 2 nucleotides from each 3' end of the viral DNA, leaving recessed CA OH's at the 3' ends. In the second step, the PIC enters cell nucleus. This process is mediated through integrase and Vpr proteins, and allows the virus to infect a non dividing cell. This ability to enter the nucleus is specific of lentiviruses, other retroviruses cannot and rely on cell division to access cell chromosomes. In the third step, termed strand transfer, the integrase protein joins the previously processed 3' ends to the 5' ends of strands of target cellular DNA at the site of integration. The 5'-ends are produced by integrase-catalyzed staggered cuts, 5 bp apart. A Y-shaped, gapped, recombination intermediate results, with the 5'-ends of the viral DNA strands and the 3' ends of target DNA strands remaining unjoined, flanking a gap of 5 bp. The last step is viral DNA integration into host chromosome. This involves host DNA repair synthesis in which the 5 bp gaps between the unjoined strands are filled in and then ligated. Since this process occurs at both cuts flanking the HIV genome, a 5 bp duplication of host DNA is produced at the ends of HIV-1 integration. Alternatively, Integrase may catalyze the excision of viral DNA just after strand transfer, this is termed disintegration.</text>
</comment>
<comment type="catalytic activity">
    <reaction evidence="10">
        <text>Specific for a P1 residue that is hydrophobic, and P1' variable, but often Pro.</text>
        <dbReference type="EC" id="3.4.23.16"/>
    </reaction>
</comment>
<comment type="catalytic activity">
    <reaction evidence="1">
        <text>Endohydrolysis of RNA in RNA/DNA hybrids. Three different cleavage modes: 1. sequence-specific internal cleavage of RNA. Human immunodeficiency virus type 1 and Moloney murine leukemia virus enzymes prefer to cleave the RNA strand one nucleotide away from the RNA-DNA junction. 2. RNA 5'-end directed cleavage 13-19 nucleotides from the RNA end. 3. DNA 3'-end directed cleavage 15-20 nucleotides away from the primer terminus.</text>
        <dbReference type="EC" id="3.1.26.13"/>
    </reaction>
</comment>
<comment type="catalytic activity">
    <reaction evidence="1">
        <text>3'-end directed exonucleolytic cleavage of viral RNA-DNA hybrid.</text>
        <dbReference type="EC" id="3.1.13.2"/>
    </reaction>
</comment>
<comment type="catalytic activity">
    <reaction evidence="11">
        <text>DNA(n) + a 2'-deoxyribonucleoside 5'-triphosphate = DNA(n+1) + diphosphate</text>
        <dbReference type="Rhea" id="RHEA:22508"/>
        <dbReference type="Rhea" id="RHEA-COMP:17339"/>
        <dbReference type="Rhea" id="RHEA-COMP:17340"/>
        <dbReference type="ChEBI" id="CHEBI:33019"/>
        <dbReference type="ChEBI" id="CHEBI:61560"/>
        <dbReference type="ChEBI" id="CHEBI:173112"/>
        <dbReference type="EC" id="2.7.7.49"/>
    </reaction>
</comment>
<comment type="catalytic activity">
    <reaction evidence="11">
        <text>DNA(n) + a 2'-deoxyribonucleoside 5'-triphosphate = DNA(n+1) + diphosphate</text>
        <dbReference type="Rhea" id="RHEA:22508"/>
        <dbReference type="Rhea" id="RHEA-COMP:17339"/>
        <dbReference type="Rhea" id="RHEA-COMP:17340"/>
        <dbReference type="ChEBI" id="CHEBI:33019"/>
        <dbReference type="ChEBI" id="CHEBI:61560"/>
        <dbReference type="ChEBI" id="CHEBI:173112"/>
        <dbReference type="EC" id="2.7.7.7"/>
    </reaction>
</comment>
<comment type="cofactor">
    <cofactor evidence="1">
        <name>Mg(2+)</name>
        <dbReference type="ChEBI" id="CHEBI:18420"/>
    </cofactor>
    <text evidence="1">Binds 2 magnesium ions for reverse transcriptase polymerase activity.</text>
</comment>
<comment type="cofactor">
    <cofactor evidence="1">
        <name>Mg(2+)</name>
        <dbReference type="ChEBI" id="CHEBI:18420"/>
    </cofactor>
    <text evidence="1">Binds 2 magnesium ions for ribonuclease H (RNase H) activity. Substrate-binding is a precondition for magnesium binding.</text>
</comment>
<comment type="cofactor">
    <cofactor evidence="1">
        <name>Mg(2+)</name>
        <dbReference type="ChEBI" id="CHEBI:18420"/>
    </cofactor>
    <text evidence="1">Magnesium ions are required for integrase activity. Binds at least 1, maybe 2 magnesium ions.</text>
</comment>
<comment type="activity regulation">
    <text evidence="1">Protease: The viral protease is inhibited by many synthetic protease inhibitors (PIs), such as amprenavir, atazanavir, indinavir, loprinavir, nelfinavir, ritonavir and saquinavir. Use of protease inhibitors in tritherapy regimens permit more ambitious therapeutic strategies. Reverse transcriptase/ribonuclease H: RT can be inhibited either by nucleoside RT inhibitors (NRTIs) or by non nucleoside RT inhibitors (NNRTIs). NRTIs act as chain terminators, whereas NNRTIs inhibit DNA polymerization by binding a small hydrophobic pocket near the RT active site and inducing an allosteric change in this region. Classical NRTIs are abacavir, adefovir (PMEA), didanosine (ddI), lamivudine (3TC), stavudine (d4T), tenofovir (PMPA), zalcitabine (ddC), and zidovudine (AZT). Classical NNRTIs are atevirdine (BHAP U-87201E), delavirdine, efavirenz (DMP-266), emivirine (I-EBU), and nevirapine (BI-RG-587). The tritherapies used as a basic effective treatment of AIDS associate two NRTIs and one NNRTI.</text>
</comment>
<comment type="subunit">
    <molecule>Matrix protein p17</molecule>
    <text evidence="5 7">Homotrimer; further assembles as hexamers of trimers (By similarity). Interacts with gp41 (via C-terminus) (By similarity). Interacts with host CALM1; this interaction induces a conformational change in the Matrix protein, triggering exposure of the myristate group (By similarity). Interacts with host AP3D1; this interaction allows the polyprotein trafficking to multivesicular bodies during virus assembly (By similarity). Part of the pre-integration complex (PIC) which is composed of viral genome, matrix protein, Vpr and integrase (By similarity).</text>
</comment>
<comment type="subunit">
    <molecule>Capsid protein p24</molecule>
    <text evidence="5 7">Homodimer; the homodimer further multimerizes as homohexamers or homopentamers. Interacts with human PPIA/CYPA (By similarity); This interaction stabilizes the capsid. Interacts with human NUP153 (By similarity). Interacts with host PDZD8; this interaction stabilizes the capsid (By similarity). Interacts with monkey TRIM5; this interaction destabilizes the capsid (By similarity).</text>
</comment>
<comment type="subunit">
    <molecule>Protease</molecule>
    <text evidence="5 7">Homodimer, whose active site consists of two apposed aspartic acid residues.</text>
</comment>
<comment type="subunit">
    <molecule>Reverse transcriptase/ribonuclease H</molecule>
    <text evidence="3">Heterodimer of p66 RT and p51 RT (RT p66/p51) (By similarity). Heterodimerization of RT is essential for DNA polymerase activity (By similarity). The overall folding of the subdomains is similar in p66 RT and p51 RT but the spatial arrangements of the subdomains are dramatically different (By similarity).</text>
</comment>
<comment type="subunit">
    <molecule>Integrase</molecule>
    <text evidence="4 5 7">Homotetramer; may further associate as a homohexadecamer (By similarity). Part of the pre-integration complex (PIC) which is composed of viral genome, matrix protein, Vpr and integrase. Interacts with human SMARCB1/INI1 and human PSIP1/LEDGF isoform 1. Interacts with human KPNA3; this interaction might play a role in nuclear import of the pre-integration complex (By similarity). Interacts with human NUP153; this interaction might play a role in nuclear import of the pre-integration complex (By similarity).</text>
</comment>
<comment type="subcellular location">
    <molecule>Gag-Pol polyprotein</molecule>
    <subcellularLocation>
        <location>Host cell membrane</location>
        <topology>Lipid-anchor</topology>
    </subcellularLocation>
    <subcellularLocation>
        <location>Host endosome</location>
        <location>Host multivesicular body</location>
    </subcellularLocation>
    <text evidence="7">These locations are linked to virus assembly sites. The main location is the cell membrane, but under some circumstances, late endosomal compartments can serve as productive sites for virion assembly.</text>
</comment>
<comment type="subcellular location">
    <molecule>Matrix protein p17</molecule>
    <subcellularLocation>
        <location>Virion membrane</location>
        <topology evidence="18">Lipid-anchor</topology>
    </subcellularLocation>
    <subcellularLocation>
        <location evidence="1">Host nucleus</location>
    </subcellularLocation>
    <subcellularLocation>
        <location evidence="1">Host cytoplasm</location>
    </subcellularLocation>
</comment>
<comment type="subcellular location">
    <molecule>Capsid protein p24</molecule>
    <subcellularLocation>
        <location evidence="18">Virion</location>
    </subcellularLocation>
</comment>
<comment type="subcellular location">
    <molecule>Nucleocapsid protein p7</molecule>
    <subcellularLocation>
        <location evidence="18">Virion</location>
    </subcellularLocation>
</comment>
<comment type="subcellular location">
    <molecule>Reverse transcriptase/ribonuclease H</molecule>
    <subcellularLocation>
        <location evidence="18">Virion</location>
    </subcellularLocation>
</comment>
<comment type="subcellular location">
    <molecule>Integrase</molecule>
    <subcellularLocation>
        <location evidence="18">Virion</location>
    </subcellularLocation>
    <subcellularLocation>
        <location evidence="18">Host nucleus</location>
    </subcellularLocation>
    <subcellularLocation>
        <location evidence="18">Host cytoplasm</location>
    </subcellularLocation>
    <text evidence="18">Nuclear at initial phase, cytoplasmic at assembly.</text>
</comment>
<comment type="alternative products">
    <event type="ribosomal frameshifting"/>
    <isoform>
        <id>Q9QBZ1-1</id>
        <name>Gag-Pol polyprotein</name>
        <sequence type="displayed"/>
    </isoform>
    <isoform>
        <id>Q9QBZ2-1</id>
        <name>Gag polyprotein</name>
        <sequence type="external"/>
    </isoform>
    <text>Translation results in the formation of the Gag polyprotein most of the time. Ribosomal frameshifting at the gag-pol genes boundary occurs at low frequency and produces the Gag-Pol polyprotein. This strategy of translation probably allows the virus to modulate the quantity of each viral protein. Maintenance of a correct Gag to Gag-Pol ratio is essential for RNA dimerization and viral infectivity.</text>
</comment>
<comment type="domain">
    <molecule>Reverse transcriptase/ribonuclease H</molecule>
    <text evidence="1">RT is structured in five subdomains: finger, palm, thumb, connection and RNase H. Within the palm subdomain, the 'primer grip' region is thought to be involved in the positioning of the primer terminus for accommodating the incoming nucleotide. The RNase H domain stabilizes the association of RT with primer-template.</text>
</comment>
<comment type="domain">
    <molecule>Reverse transcriptase/ribonuclease H</molecule>
    <text evidence="1">The tryptophan repeat motif is involved in RT p66/p51 dimerization (By similarity).</text>
</comment>
<comment type="domain">
    <molecule>Integrase</molecule>
    <text evidence="1">The core domain contains the D-x(n)-D-x(35)-E motif, named for the phylogenetically conserved glutamic acid and aspartic acid residues and the invariant 35 amino acid spacing between the second and third acidic residues. Each acidic residue of the D,D(35)E motif is independently essential for the 3'-processing and strand transfer activities of purified integrase protein.</text>
</comment>
<comment type="PTM">
    <molecule>Gag-Pol polyprotein</molecule>
    <text evidence="5 11">Specific enzymatic cleavages by the viral protease yield mature proteins. The protease is released by autocatalytic cleavage. The polyprotein is cleaved during and after budding, this process is termed maturation. Proteolytic cleavage of p66 RT removes the RNase H domain to yield the p51 RT subunit. Nucleocapsid protein p7 might be further cleaved after virus entry.</text>
</comment>
<comment type="PTM">
    <molecule>Matrix protein p17</molecule>
    <text evidence="5">Tyrosine phosphorylated presumably in the virion by a host kinase. Phosphorylation is apparently not a major regulator of membrane association.</text>
</comment>
<comment type="PTM">
    <molecule>Capsid protein p24</molecule>
    <text evidence="6">Phosphorylated possibly by host MAPK1; this phosphorylation is necessary for Pin1-mediated virion uncoating.</text>
</comment>
<comment type="PTM">
    <molecule>Nucleocapsid protein p7</molecule>
    <text evidence="2">Methylated by host PRMT6, impairing its function by reducing RNA annealing and the initiation of reverse transcription.</text>
</comment>
<comment type="miscellaneous">
    <molecule>Reverse transcriptase/ribonuclease H</molecule>
    <text evidence="1">Error-prone enzyme that lacks a proof-reading function. High mutations rate is a direct consequence of this characteristic. RT also displays frequent template switching leading to high recombination rate. Recombination mostly occurs between homologous regions of the two copackaged RNA genomes. If these two RNA molecules derive from different viral strains, reverse transcription will give rise to highly recombinated proviral DNAs.</text>
</comment>
<comment type="miscellaneous">
    <text>HIV-1 lineages are divided in three main groups, M (for Major), O (for Outlier), and N (for New, or Non-M, Non-O). The vast majority of strains found worldwide belong to the group M. Group O seems to be endemic to and largely confined to Cameroon and neighboring countries in West Central Africa, where these viruses represent a small minority of HIV-1 strains. The group N is represented by a limited number of isolates from Cameroonian persons. The group M is further subdivided in 9 clades or subtypes (A to D, F to H, J and K).</text>
</comment>
<comment type="miscellaneous">
    <text>Resistance to inhibitors associated with mutations are observed both in viral protease and in reverse transcriptase. Most of the time, single mutations confer only a modest reduction in drug susceptibility. Combination of several mutations is usually required to develop a high-level drug resistance. These mutations are predominantly found in clade B viruses and not in other genotypes. They are listed in the clade B representative isolate HXB2 (AC P04585).</text>
</comment>
<comment type="miscellaneous">
    <molecule>Isoform Gag-Pol polyprotein</molecule>
    <text>Produced by -1 ribosomal frameshifting.</text>
</comment>
<comment type="online information" name="HIV drug resistance mutations">
    <link uri="https://www.iasusa.org/hiv-drug-resistance/hiv-drug-resistance-mutations/"/>
</comment>
<comment type="online information" name="hivdb">
    <link uri="https://hivdb.stanford.edu"/>
    <text>HIV drug resistance database</text>
</comment>
<protein>
    <recommendedName>
        <fullName>Gag-Pol polyprotein</fullName>
    </recommendedName>
    <alternativeName>
        <fullName>Pr160Gag-Pol</fullName>
    </alternativeName>
    <component>
        <recommendedName>
            <fullName>Matrix protein p17</fullName>
            <shortName>MA</shortName>
        </recommendedName>
    </component>
    <component>
        <recommendedName>
            <fullName>Capsid protein p24</fullName>
            <shortName>CA</shortName>
        </recommendedName>
    </component>
    <component>
        <recommendedName>
            <fullName evidence="7">Spacer peptide 1</fullName>
            <shortName>SP1</shortName>
        </recommendedName>
        <alternativeName>
            <fullName>p2</fullName>
        </alternativeName>
    </component>
    <component>
        <recommendedName>
            <fullName>Nucleocapsid protein p7</fullName>
            <shortName>NC</shortName>
        </recommendedName>
    </component>
    <component>
        <recommendedName>
            <fullName>Transframe peptide</fullName>
            <shortName>TF</shortName>
        </recommendedName>
    </component>
    <component>
        <recommendedName>
            <fullName>p6-pol</fullName>
            <shortName>p6*</shortName>
        </recommendedName>
    </component>
    <component>
        <recommendedName>
            <fullName>Protease</fullName>
            <ecNumber>3.4.23.16</ecNumber>
        </recommendedName>
        <alternativeName>
            <fullName>PR</fullName>
        </alternativeName>
        <alternativeName>
            <fullName>Retropepsin</fullName>
        </alternativeName>
    </component>
    <component>
        <recommendedName>
            <fullName>Reverse transcriptase/ribonuclease H</fullName>
            <ecNumber>2.7.7.49</ecNumber>
            <ecNumber>2.7.7.7</ecNumber>
            <ecNumber>3.1.26.13</ecNumber>
        </recommendedName>
        <alternativeName>
            <fullName>Exoribonuclease H</fullName>
            <ecNumber>3.1.13.2</ecNumber>
        </alternativeName>
        <alternativeName>
            <fullName>p66 RT</fullName>
        </alternativeName>
    </component>
    <component>
        <recommendedName>
            <fullName>p51 RT</fullName>
        </recommendedName>
    </component>
    <component>
        <recommendedName>
            <fullName>p15</fullName>
        </recommendedName>
    </component>
    <component>
        <recommendedName>
            <fullName>Integrase</fullName>
            <shortName>IN</shortName>
            <ecNumber evidence="5">2.7.7.-</ecNumber>
            <ecNumber evidence="5">3.1.-.-</ecNumber>
        </recommendedName>
    </component>
</protein>
<keyword id="KW-1073">Activation of host caspases by virus</keyword>
<keyword id="KW-0014">AIDS</keyword>
<keyword id="KW-0064">Aspartyl protease</keyword>
<keyword id="KW-0167">Capsid protein</keyword>
<keyword id="KW-0229">DNA integration</keyword>
<keyword id="KW-0233">DNA recombination</keyword>
<keyword id="KW-0238">DNA-binding</keyword>
<keyword id="KW-0239">DNA-directed DNA polymerase</keyword>
<keyword id="KW-0255">Endonuclease</keyword>
<keyword id="KW-1262">Eukaryotic host gene expression shutoff by virus</keyword>
<keyword id="KW-1193">Eukaryotic host translation shutoff by virus</keyword>
<keyword id="KW-1032">Host cell membrane</keyword>
<keyword id="KW-1035">Host cytoplasm</keyword>
<keyword id="KW-1039">Host endosome</keyword>
<keyword id="KW-1190">Host gene expression shutoff by virus</keyword>
<keyword id="KW-1043">Host membrane</keyword>
<keyword id="KW-1048">Host nucleus</keyword>
<keyword id="KW-0945">Host-virus interaction</keyword>
<keyword id="KW-0378">Hydrolase</keyword>
<keyword id="KW-0446">Lipid-binding</keyword>
<keyword id="KW-0449">Lipoprotein</keyword>
<keyword id="KW-0460">Magnesium</keyword>
<keyword id="KW-0472">Membrane</keyword>
<keyword id="KW-0479">Metal-binding</keyword>
<keyword id="KW-1119">Modulation of host cell apoptosis by virus</keyword>
<keyword id="KW-0511">Multifunctional enzyme</keyword>
<keyword id="KW-0519">Myristate</keyword>
<keyword id="KW-0540">Nuclease</keyword>
<keyword id="KW-0548">Nucleotidyltransferase</keyword>
<keyword id="KW-0597">Phosphoprotein</keyword>
<keyword id="KW-0645">Protease</keyword>
<keyword id="KW-0677">Repeat</keyword>
<keyword id="KW-0688">Ribosomal frameshifting</keyword>
<keyword id="KW-0694">RNA-binding</keyword>
<keyword id="KW-0695">RNA-directed DNA polymerase</keyword>
<keyword id="KW-0808">Transferase</keyword>
<keyword id="KW-1179">Viral genome integration</keyword>
<keyword id="KW-0543">Viral nucleoprotein</keyword>
<keyword id="KW-1163">Viral penetration into host nucleus</keyword>
<keyword id="KW-1188">Viral release from host cell</keyword>
<keyword id="KW-0946">Virion</keyword>
<keyword id="KW-0917">Virion maturation</keyword>
<keyword id="KW-1160">Virus entry into host cell</keyword>
<keyword id="KW-0862">Zinc</keyword>
<keyword id="KW-0863">Zinc-finger</keyword>